<proteinExistence type="inferred from homology"/>
<keyword id="KW-0413">Isomerase</keyword>
<keyword id="KW-0460">Magnesium</keyword>
<keyword id="KW-0479">Metal-binding</keyword>
<keyword id="KW-0597">Phosphoprotein</keyword>
<keyword id="KW-1185">Reference proteome</keyword>
<evidence type="ECO:0000255" key="1">
    <source>
        <dbReference type="HAMAP-Rule" id="MF_01554"/>
    </source>
</evidence>
<gene>
    <name evidence="1" type="primary">glmM</name>
    <name type="ordered locus">plu4533</name>
</gene>
<protein>
    <recommendedName>
        <fullName evidence="1">Phosphoglucosamine mutase</fullName>
        <ecNumber evidence="1">5.4.2.10</ecNumber>
    </recommendedName>
</protein>
<sequence length="445" mass="47953">MSNRKYFGTDGIRGKVGDSPITPDFVLKLGWAAGKVLARHGSRKIIIGKDTRISGYMLESSLEAGLAAAGLSASFTGPMPTPAVAYLTRTFRAEAGIVISASHNPYYDNGIKFFSIDGTKLPDDVEEAIEAEMEKPLTCVESAELGRANRIVDAAGRYIEFCKGTFPSEQSLNGLKIVLDCANGATYHIAPNVLRELGADVVTIGCEPNGININEKCGATDVRLLQQRVVEEKADVGLAFDGDGDRVIMVDHLGQKVDGDQILYIIAREALRQGQLRGGVVGTLMSNMGLELALKQLGIPFLRAKVGDRYVLEKLQEEGWRLGAENSGHVILLDKTTTGDGIVAGLQILSAMVRNHMSLHDLCSGMKLLPQVLVNVRFSGSHDPLKSENVINITKSVETELNGRGRVLLRKSGTEPLIRVMVEGEDDVQVTALAHRIADAVKHAG</sequence>
<organism>
    <name type="scientific">Photorhabdus laumondii subsp. laumondii (strain DSM 15139 / CIP 105565 / TT01)</name>
    <name type="common">Photorhabdus luminescens subsp. laumondii</name>
    <dbReference type="NCBI Taxonomy" id="243265"/>
    <lineage>
        <taxon>Bacteria</taxon>
        <taxon>Pseudomonadati</taxon>
        <taxon>Pseudomonadota</taxon>
        <taxon>Gammaproteobacteria</taxon>
        <taxon>Enterobacterales</taxon>
        <taxon>Morganellaceae</taxon>
        <taxon>Photorhabdus</taxon>
    </lineage>
</organism>
<dbReference type="EC" id="5.4.2.10" evidence="1"/>
<dbReference type="EMBL" id="BX571874">
    <property type="protein sequence ID" value="CAE16905.1"/>
    <property type="molecule type" value="Genomic_DNA"/>
</dbReference>
<dbReference type="RefSeq" id="WP_011148609.1">
    <property type="nucleotide sequence ID" value="NC_005126.1"/>
</dbReference>
<dbReference type="SMR" id="Q7MYY3"/>
<dbReference type="STRING" id="243265.plu4533"/>
<dbReference type="GeneID" id="48850744"/>
<dbReference type="KEGG" id="plu:plu4533"/>
<dbReference type="eggNOG" id="COG1109">
    <property type="taxonomic scope" value="Bacteria"/>
</dbReference>
<dbReference type="HOGENOM" id="CLU_016950_7_0_6"/>
<dbReference type="OrthoDB" id="9803322at2"/>
<dbReference type="Proteomes" id="UP000002514">
    <property type="component" value="Chromosome"/>
</dbReference>
<dbReference type="GO" id="GO:0005829">
    <property type="term" value="C:cytosol"/>
    <property type="evidence" value="ECO:0007669"/>
    <property type="project" value="TreeGrafter"/>
</dbReference>
<dbReference type="GO" id="GO:0000287">
    <property type="term" value="F:magnesium ion binding"/>
    <property type="evidence" value="ECO:0007669"/>
    <property type="project" value="UniProtKB-UniRule"/>
</dbReference>
<dbReference type="GO" id="GO:0008966">
    <property type="term" value="F:phosphoglucosamine mutase activity"/>
    <property type="evidence" value="ECO:0007669"/>
    <property type="project" value="UniProtKB-UniRule"/>
</dbReference>
<dbReference type="GO" id="GO:0004615">
    <property type="term" value="F:phosphomannomutase activity"/>
    <property type="evidence" value="ECO:0007669"/>
    <property type="project" value="TreeGrafter"/>
</dbReference>
<dbReference type="GO" id="GO:0005975">
    <property type="term" value="P:carbohydrate metabolic process"/>
    <property type="evidence" value="ECO:0007669"/>
    <property type="project" value="InterPro"/>
</dbReference>
<dbReference type="GO" id="GO:0009252">
    <property type="term" value="P:peptidoglycan biosynthetic process"/>
    <property type="evidence" value="ECO:0007669"/>
    <property type="project" value="TreeGrafter"/>
</dbReference>
<dbReference type="GO" id="GO:0006048">
    <property type="term" value="P:UDP-N-acetylglucosamine biosynthetic process"/>
    <property type="evidence" value="ECO:0007669"/>
    <property type="project" value="TreeGrafter"/>
</dbReference>
<dbReference type="CDD" id="cd05802">
    <property type="entry name" value="GlmM"/>
    <property type="match status" value="1"/>
</dbReference>
<dbReference type="FunFam" id="3.30.310.50:FF:000001">
    <property type="entry name" value="Phosphoglucosamine mutase"/>
    <property type="match status" value="1"/>
</dbReference>
<dbReference type="FunFam" id="3.40.120.10:FF:000001">
    <property type="entry name" value="Phosphoglucosamine mutase"/>
    <property type="match status" value="1"/>
</dbReference>
<dbReference type="FunFam" id="3.40.120.10:FF:000002">
    <property type="entry name" value="Phosphoglucosamine mutase"/>
    <property type="match status" value="1"/>
</dbReference>
<dbReference type="Gene3D" id="3.40.120.10">
    <property type="entry name" value="Alpha-D-Glucose-1,6-Bisphosphate, subunit A, domain 3"/>
    <property type="match status" value="3"/>
</dbReference>
<dbReference type="Gene3D" id="3.30.310.50">
    <property type="entry name" value="Alpha-D-phosphohexomutase, C-terminal domain"/>
    <property type="match status" value="1"/>
</dbReference>
<dbReference type="HAMAP" id="MF_01554_B">
    <property type="entry name" value="GlmM_B"/>
    <property type="match status" value="1"/>
</dbReference>
<dbReference type="InterPro" id="IPR005844">
    <property type="entry name" value="A-D-PHexomutase_a/b/a-I"/>
</dbReference>
<dbReference type="InterPro" id="IPR016055">
    <property type="entry name" value="A-D-PHexomutase_a/b/a-I/II/III"/>
</dbReference>
<dbReference type="InterPro" id="IPR005845">
    <property type="entry name" value="A-D-PHexomutase_a/b/a-II"/>
</dbReference>
<dbReference type="InterPro" id="IPR005846">
    <property type="entry name" value="A-D-PHexomutase_a/b/a-III"/>
</dbReference>
<dbReference type="InterPro" id="IPR005843">
    <property type="entry name" value="A-D-PHexomutase_C"/>
</dbReference>
<dbReference type="InterPro" id="IPR036900">
    <property type="entry name" value="A-D-PHexomutase_C_sf"/>
</dbReference>
<dbReference type="InterPro" id="IPR016066">
    <property type="entry name" value="A-D-PHexomutase_CS"/>
</dbReference>
<dbReference type="InterPro" id="IPR005841">
    <property type="entry name" value="Alpha-D-phosphohexomutase_SF"/>
</dbReference>
<dbReference type="InterPro" id="IPR006352">
    <property type="entry name" value="GlmM_bact"/>
</dbReference>
<dbReference type="InterPro" id="IPR050060">
    <property type="entry name" value="Phosphoglucosamine_mutase"/>
</dbReference>
<dbReference type="NCBIfam" id="TIGR01455">
    <property type="entry name" value="glmM"/>
    <property type="match status" value="1"/>
</dbReference>
<dbReference type="NCBIfam" id="NF008139">
    <property type="entry name" value="PRK10887.1"/>
    <property type="match status" value="1"/>
</dbReference>
<dbReference type="PANTHER" id="PTHR42946:SF1">
    <property type="entry name" value="PHOSPHOGLUCOMUTASE (ALPHA-D-GLUCOSE-1,6-BISPHOSPHATE-DEPENDENT)"/>
    <property type="match status" value="1"/>
</dbReference>
<dbReference type="PANTHER" id="PTHR42946">
    <property type="entry name" value="PHOSPHOHEXOSE MUTASE"/>
    <property type="match status" value="1"/>
</dbReference>
<dbReference type="Pfam" id="PF02878">
    <property type="entry name" value="PGM_PMM_I"/>
    <property type="match status" value="1"/>
</dbReference>
<dbReference type="Pfam" id="PF02879">
    <property type="entry name" value="PGM_PMM_II"/>
    <property type="match status" value="1"/>
</dbReference>
<dbReference type="Pfam" id="PF02880">
    <property type="entry name" value="PGM_PMM_III"/>
    <property type="match status" value="1"/>
</dbReference>
<dbReference type="Pfam" id="PF00408">
    <property type="entry name" value="PGM_PMM_IV"/>
    <property type="match status" value="1"/>
</dbReference>
<dbReference type="PRINTS" id="PR00509">
    <property type="entry name" value="PGMPMM"/>
</dbReference>
<dbReference type="SUPFAM" id="SSF55957">
    <property type="entry name" value="Phosphoglucomutase, C-terminal domain"/>
    <property type="match status" value="1"/>
</dbReference>
<dbReference type="SUPFAM" id="SSF53738">
    <property type="entry name" value="Phosphoglucomutase, first 3 domains"/>
    <property type="match status" value="3"/>
</dbReference>
<dbReference type="PROSITE" id="PS00710">
    <property type="entry name" value="PGM_PMM"/>
    <property type="match status" value="1"/>
</dbReference>
<name>GLMM_PHOLL</name>
<feature type="chain" id="PRO_0000147932" description="Phosphoglucosamine mutase">
    <location>
        <begin position="1"/>
        <end position="445"/>
    </location>
</feature>
<feature type="active site" description="Phosphoserine intermediate" evidence="1">
    <location>
        <position position="102"/>
    </location>
</feature>
<feature type="binding site" description="via phosphate group" evidence="1">
    <location>
        <position position="102"/>
    </location>
    <ligand>
        <name>Mg(2+)</name>
        <dbReference type="ChEBI" id="CHEBI:18420"/>
    </ligand>
</feature>
<feature type="binding site" evidence="1">
    <location>
        <position position="241"/>
    </location>
    <ligand>
        <name>Mg(2+)</name>
        <dbReference type="ChEBI" id="CHEBI:18420"/>
    </ligand>
</feature>
<feature type="binding site" evidence="1">
    <location>
        <position position="243"/>
    </location>
    <ligand>
        <name>Mg(2+)</name>
        <dbReference type="ChEBI" id="CHEBI:18420"/>
    </ligand>
</feature>
<feature type="binding site" evidence="1">
    <location>
        <position position="245"/>
    </location>
    <ligand>
        <name>Mg(2+)</name>
        <dbReference type="ChEBI" id="CHEBI:18420"/>
    </ligand>
</feature>
<feature type="modified residue" description="Phosphoserine" evidence="1">
    <location>
        <position position="102"/>
    </location>
</feature>
<accession>Q7MYY3</accession>
<reference key="1">
    <citation type="journal article" date="2003" name="Nat. Biotechnol.">
        <title>The genome sequence of the entomopathogenic bacterium Photorhabdus luminescens.</title>
        <authorList>
            <person name="Duchaud E."/>
            <person name="Rusniok C."/>
            <person name="Frangeul L."/>
            <person name="Buchrieser C."/>
            <person name="Givaudan A."/>
            <person name="Taourit S."/>
            <person name="Bocs S."/>
            <person name="Boursaux-Eude C."/>
            <person name="Chandler M."/>
            <person name="Charles J.-F."/>
            <person name="Dassa E."/>
            <person name="Derose R."/>
            <person name="Derzelle S."/>
            <person name="Freyssinet G."/>
            <person name="Gaudriault S."/>
            <person name="Medigue C."/>
            <person name="Lanois A."/>
            <person name="Powell K."/>
            <person name="Siguier P."/>
            <person name="Vincent R."/>
            <person name="Wingate V."/>
            <person name="Zouine M."/>
            <person name="Glaser P."/>
            <person name="Boemare N."/>
            <person name="Danchin A."/>
            <person name="Kunst F."/>
        </authorList>
    </citation>
    <scope>NUCLEOTIDE SEQUENCE [LARGE SCALE GENOMIC DNA]</scope>
    <source>
        <strain>DSM 15139 / CIP 105565 / TT01</strain>
    </source>
</reference>
<comment type="function">
    <text evidence="1">Catalyzes the conversion of glucosamine-6-phosphate to glucosamine-1-phosphate.</text>
</comment>
<comment type="catalytic activity">
    <reaction evidence="1">
        <text>alpha-D-glucosamine 1-phosphate = D-glucosamine 6-phosphate</text>
        <dbReference type="Rhea" id="RHEA:23424"/>
        <dbReference type="ChEBI" id="CHEBI:58516"/>
        <dbReference type="ChEBI" id="CHEBI:58725"/>
        <dbReference type="EC" id="5.4.2.10"/>
    </reaction>
</comment>
<comment type="cofactor">
    <cofactor evidence="1">
        <name>Mg(2+)</name>
        <dbReference type="ChEBI" id="CHEBI:18420"/>
    </cofactor>
    <text evidence="1">Binds 1 Mg(2+) ion per subunit.</text>
</comment>
<comment type="PTM">
    <text evidence="1">Activated by phosphorylation.</text>
</comment>
<comment type="similarity">
    <text evidence="1">Belongs to the phosphohexose mutase family.</text>
</comment>